<comment type="function">
    <text evidence="2">Deubiquitinating enzyme that may play a role in the ubiquitin-dependent regulation of different cellular processes.</text>
</comment>
<comment type="catalytic activity">
    <reaction evidence="2">
        <text>Thiol-dependent hydrolysis of ester, thioester, amide, peptide and isopeptide bonds formed by the C-terminal Gly of ubiquitin (a 76-residue protein attached to proteins as an intracellular targeting signal).</text>
        <dbReference type="EC" id="3.4.19.12"/>
    </reaction>
</comment>
<proteinExistence type="evidence at transcript level"/>
<protein>
    <recommendedName>
        <fullName evidence="5">Deubiquitinase OTUD6B</fullName>
        <ecNumber evidence="2">3.4.19.12</ecNumber>
    </recommendedName>
</protein>
<name>OTU6B_DANRE</name>
<dbReference type="EC" id="3.4.19.12" evidence="2"/>
<dbReference type="EMBL" id="BC046060">
    <property type="protein sequence ID" value="AAH46060.1"/>
    <property type="molecule type" value="mRNA"/>
</dbReference>
<dbReference type="RefSeq" id="NP_956519.1">
    <property type="nucleotide sequence ID" value="NM_200225.1"/>
</dbReference>
<dbReference type="SMR" id="Q7ZV00"/>
<dbReference type="FunCoup" id="Q7ZV00">
    <property type="interactions" value="1500"/>
</dbReference>
<dbReference type="STRING" id="7955.ENSDARP00000130662"/>
<dbReference type="MEROPS" id="C85.009"/>
<dbReference type="PaxDb" id="7955-ENSDARP00000110547"/>
<dbReference type="GeneID" id="393194"/>
<dbReference type="KEGG" id="dre:393194"/>
<dbReference type="AGR" id="ZFIN:ZDB-GENE-040426-974"/>
<dbReference type="CTD" id="51633"/>
<dbReference type="ZFIN" id="ZDB-GENE-040426-974">
    <property type="gene designation" value="otud6b"/>
</dbReference>
<dbReference type="eggNOG" id="KOG2606">
    <property type="taxonomic scope" value="Eukaryota"/>
</dbReference>
<dbReference type="InParanoid" id="Q7ZV00"/>
<dbReference type="OrthoDB" id="415023at2759"/>
<dbReference type="PhylomeDB" id="Q7ZV00"/>
<dbReference type="PRO" id="PR:Q7ZV00"/>
<dbReference type="Proteomes" id="UP000000437">
    <property type="component" value="Chromosome 19"/>
</dbReference>
<dbReference type="GO" id="GO:0004843">
    <property type="term" value="F:cysteine-type deubiquitinase activity"/>
    <property type="evidence" value="ECO:0000250"/>
    <property type="project" value="UniProtKB"/>
</dbReference>
<dbReference type="GO" id="GO:0140374">
    <property type="term" value="P:antiviral innate immune response"/>
    <property type="evidence" value="ECO:0000315"/>
    <property type="project" value="ZFIN"/>
</dbReference>
<dbReference type="GO" id="GO:0016579">
    <property type="term" value="P:protein deubiquitination"/>
    <property type="evidence" value="ECO:0000250"/>
    <property type="project" value="UniProtKB"/>
</dbReference>
<dbReference type="GO" id="GO:0006508">
    <property type="term" value="P:proteolysis"/>
    <property type="evidence" value="ECO:0007669"/>
    <property type="project" value="UniProtKB-KW"/>
</dbReference>
<dbReference type="CDD" id="cd22761">
    <property type="entry name" value="OTU_OTUD6"/>
    <property type="match status" value="1"/>
</dbReference>
<dbReference type="FunFam" id="3.90.70.80:FF:000003">
    <property type="entry name" value="OTU domain-containing protein 6B"/>
    <property type="match status" value="1"/>
</dbReference>
<dbReference type="Gene3D" id="3.90.70.80">
    <property type="match status" value="1"/>
</dbReference>
<dbReference type="InterPro" id="IPR003323">
    <property type="entry name" value="OTU_dom"/>
</dbReference>
<dbReference type="InterPro" id="IPR049772">
    <property type="entry name" value="OTU_OTUD6"/>
</dbReference>
<dbReference type="InterPro" id="IPR038765">
    <property type="entry name" value="Papain-like_cys_pep_sf"/>
</dbReference>
<dbReference type="InterPro" id="IPR050704">
    <property type="entry name" value="Peptidase_C85-like"/>
</dbReference>
<dbReference type="PANTHER" id="PTHR12419:SF10">
    <property type="entry name" value="DEUBIQUITINASE OTUD6B"/>
    <property type="match status" value="1"/>
</dbReference>
<dbReference type="PANTHER" id="PTHR12419">
    <property type="entry name" value="OTU DOMAIN CONTAINING PROTEIN"/>
    <property type="match status" value="1"/>
</dbReference>
<dbReference type="Pfam" id="PF02338">
    <property type="entry name" value="OTU"/>
    <property type="match status" value="1"/>
</dbReference>
<dbReference type="SUPFAM" id="SSF54001">
    <property type="entry name" value="Cysteine proteinases"/>
    <property type="match status" value="1"/>
</dbReference>
<dbReference type="PROSITE" id="PS50802">
    <property type="entry name" value="OTU"/>
    <property type="match status" value="1"/>
</dbReference>
<gene>
    <name type="primary">otud6b</name>
    <name type="ORF">zgc:56305</name>
</gene>
<organism>
    <name type="scientific">Danio rerio</name>
    <name type="common">Zebrafish</name>
    <name type="synonym">Brachydanio rerio</name>
    <dbReference type="NCBI Taxonomy" id="7955"/>
    <lineage>
        <taxon>Eukaryota</taxon>
        <taxon>Metazoa</taxon>
        <taxon>Chordata</taxon>
        <taxon>Craniata</taxon>
        <taxon>Vertebrata</taxon>
        <taxon>Euteleostomi</taxon>
        <taxon>Actinopterygii</taxon>
        <taxon>Neopterygii</taxon>
        <taxon>Teleostei</taxon>
        <taxon>Ostariophysi</taxon>
        <taxon>Cypriniformes</taxon>
        <taxon>Danionidae</taxon>
        <taxon>Danioninae</taxon>
        <taxon>Danio</taxon>
    </lineage>
</organism>
<sequence>MEEVETAEEQLAKQHRKEKKDLQAKIQSMKNAVPKNDKKRRKQLTEDIAKLEAELSQKHENELKLQNTSSVEEVSDALDSMSVANHEEQSDPSKQSRTSKAQKRRDKKAALEKEREMRIAEAEVENLSGSRHQEGLKLREKLVERHLQIKEISSDGHCMYRAVEHQLTERGLALGLKELRDQTAQYMRSHADDFMPFLTNPNTGDMYTAEEFEKYCSDVADTAAWGGQLELKALSQVLQLPIEVIQADSPCITIGEEYDKPKITLIYMRHAYGLGEHYNSVEPLKDLANEEEG</sequence>
<accession>Q7ZV00</accession>
<reference key="1">
    <citation type="submission" date="2003-01" db="EMBL/GenBank/DDBJ databases">
        <authorList>
            <consortium name="NIH - Zebrafish Gene Collection (ZGC) project"/>
        </authorList>
    </citation>
    <scope>NUCLEOTIDE SEQUENCE [LARGE SCALE MRNA]</scope>
</reference>
<keyword id="KW-0378">Hydrolase</keyword>
<keyword id="KW-0645">Protease</keyword>
<keyword id="KW-1185">Reference proteome</keyword>
<keyword id="KW-0788">Thiol protease</keyword>
<keyword id="KW-0833">Ubl conjugation pathway</keyword>
<feature type="chain" id="PRO_0000076282" description="Deubiquitinase OTUD6B">
    <location>
        <begin position="1"/>
        <end position="293"/>
    </location>
</feature>
<feature type="domain" description="OTU" evidence="3">
    <location>
        <begin position="147"/>
        <end position="284"/>
    </location>
</feature>
<feature type="region of interest" description="Disordered" evidence="4">
    <location>
        <begin position="1"/>
        <end position="43"/>
    </location>
</feature>
<feature type="region of interest" description="Disordered" evidence="4">
    <location>
        <begin position="57"/>
        <end position="114"/>
    </location>
</feature>
<feature type="region of interest" description="Cys-loop" evidence="1">
    <location>
        <begin position="152"/>
        <end position="158"/>
    </location>
</feature>
<feature type="region of interest" description="Variable-loop" evidence="1">
    <location>
        <begin position="219"/>
        <end position="229"/>
    </location>
</feature>
<feature type="region of interest" description="His-loop" evidence="1">
    <location>
        <begin position="267"/>
        <end position="277"/>
    </location>
</feature>
<feature type="active site" evidence="1">
    <location>
        <position position="155"/>
    </location>
</feature>
<feature type="active site" description="Nucleophile" evidence="2">
    <location>
        <position position="158"/>
    </location>
</feature>
<feature type="active site" evidence="1">
    <location>
        <position position="277"/>
    </location>
</feature>
<evidence type="ECO:0000250" key="1"/>
<evidence type="ECO:0000250" key="2">
    <source>
        <dbReference type="UniProtKB" id="Q8N6M0"/>
    </source>
</evidence>
<evidence type="ECO:0000255" key="3">
    <source>
        <dbReference type="PROSITE-ProRule" id="PRU00139"/>
    </source>
</evidence>
<evidence type="ECO:0000256" key="4">
    <source>
        <dbReference type="SAM" id="MobiDB-lite"/>
    </source>
</evidence>
<evidence type="ECO:0000305" key="5"/>